<gene>
    <name type="primary">ASNSD1</name>
    <name type="synonym">NS3TP1</name>
    <name type="ORF">Nbla00058</name>
</gene>
<dbReference type="EMBL" id="AY116969">
    <property type="protein sequence ID" value="AAM77212.1"/>
    <property type="molecule type" value="mRNA"/>
</dbReference>
<dbReference type="EMBL" id="AK000759">
    <property type="protein sequence ID" value="BAA91364.1"/>
    <property type="molecule type" value="mRNA"/>
</dbReference>
<dbReference type="EMBL" id="AC012488">
    <property type="protein sequence ID" value="AAX88843.1"/>
    <property type="molecule type" value="Genomic_DNA"/>
</dbReference>
<dbReference type="EMBL" id="CH471058">
    <property type="protein sequence ID" value="EAX10898.1"/>
    <property type="molecule type" value="Genomic_DNA"/>
</dbReference>
<dbReference type="EMBL" id="CH471058">
    <property type="protein sequence ID" value="EAX10899.1"/>
    <property type="molecule type" value="Genomic_DNA"/>
</dbReference>
<dbReference type="EMBL" id="CH471058">
    <property type="protein sequence ID" value="EAX10900.1"/>
    <property type="molecule type" value="Genomic_DNA"/>
</dbReference>
<dbReference type="EMBL" id="BC001243">
    <property type="protein sequence ID" value="AAH01243.1"/>
    <property type="molecule type" value="mRNA"/>
</dbReference>
<dbReference type="EMBL" id="AB075481">
    <property type="protein sequence ID" value="BAE45745.1"/>
    <property type="molecule type" value="mRNA"/>
</dbReference>
<dbReference type="CCDS" id="CCDS2300.1">
    <molecule id="Q9NWL6-1"/>
</dbReference>
<dbReference type="RefSeq" id="NP_001340426.1">
    <molecule id="Q9NWL6-1"/>
    <property type="nucleotide sequence ID" value="NM_001353497.2"/>
</dbReference>
<dbReference type="RefSeq" id="NP_061921.2">
    <molecule id="Q9NWL6-1"/>
    <property type="nucleotide sequence ID" value="NM_019048.4"/>
</dbReference>
<dbReference type="RefSeq" id="XP_016859870.1">
    <property type="nucleotide sequence ID" value="XM_017004381.1"/>
</dbReference>
<dbReference type="RefSeq" id="XP_016859871.1">
    <property type="nucleotide sequence ID" value="XM_017004382.1"/>
</dbReference>
<dbReference type="SMR" id="Q9NWL6"/>
<dbReference type="BioGRID" id="120017">
    <property type="interactions" value="28"/>
</dbReference>
<dbReference type="FunCoup" id="Q9NWL6">
    <property type="interactions" value="267"/>
</dbReference>
<dbReference type="IntAct" id="Q9NWL6">
    <property type="interactions" value="8"/>
</dbReference>
<dbReference type="STRING" id="9606.ENSP00000260952"/>
<dbReference type="iPTMnet" id="Q9NWL6"/>
<dbReference type="PhosphoSitePlus" id="Q9NWL6"/>
<dbReference type="BioMuta" id="ASNSD1"/>
<dbReference type="DMDM" id="311033363"/>
<dbReference type="jPOST" id="Q9NWL6"/>
<dbReference type="MassIVE" id="Q9NWL6"/>
<dbReference type="PaxDb" id="9606-ENSP00000260952"/>
<dbReference type="PeptideAtlas" id="Q9NWL6"/>
<dbReference type="ProteomicsDB" id="82945"/>
<dbReference type="Pumba" id="Q9NWL6"/>
<dbReference type="Antibodypedia" id="34024">
    <property type="antibodies" value="138 antibodies from 23 providers"/>
</dbReference>
<dbReference type="DNASU" id="54529"/>
<dbReference type="Ensembl" id="ENST00000260952.9">
    <molecule id="Q9NWL6-1"/>
    <property type="protein sequence ID" value="ENSP00000260952.4"/>
    <property type="gene ID" value="ENSG00000138381.10"/>
</dbReference>
<dbReference type="GeneID" id="54529"/>
<dbReference type="KEGG" id="hsa:54529"/>
<dbReference type="MANE-Select" id="ENST00000260952.9">
    <property type="protein sequence ID" value="ENSP00000260952.4"/>
    <property type="RefSeq nucleotide sequence ID" value="NM_019048.4"/>
    <property type="RefSeq protein sequence ID" value="NP_061921.2"/>
</dbReference>
<dbReference type="UCSC" id="uc002uqt.4">
    <molecule id="Q9NWL6-1"/>
    <property type="organism name" value="human"/>
</dbReference>
<dbReference type="AGR" id="HGNC:24910"/>
<dbReference type="CTD" id="54529"/>
<dbReference type="DisGeNET" id="54529"/>
<dbReference type="GeneCards" id="ASNSD1"/>
<dbReference type="HGNC" id="HGNC:24910">
    <property type="gene designation" value="ASNSD1"/>
</dbReference>
<dbReference type="HPA" id="ENSG00000138381">
    <property type="expression patterns" value="Low tissue specificity"/>
</dbReference>
<dbReference type="MIM" id="619739">
    <property type="type" value="gene"/>
</dbReference>
<dbReference type="neXtProt" id="NX_Q9NWL6"/>
<dbReference type="OpenTargets" id="ENSG00000138381"/>
<dbReference type="PharmGKB" id="PA143485312"/>
<dbReference type="VEuPathDB" id="HostDB:ENSG00000138381"/>
<dbReference type="eggNOG" id="KOG0573">
    <property type="taxonomic scope" value="Eukaryota"/>
</dbReference>
<dbReference type="GeneTree" id="ENSGT00390000012446"/>
<dbReference type="InParanoid" id="Q9NWL6"/>
<dbReference type="OMA" id="SVYESCP"/>
<dbReference type="OrthoDB" id="10252281at2759"/>
<dbReference type="PAN-GO" id="Q9NWL6">
    <property type="GO annotations" value="0 GO annotations based on evolutionary models"/>
</dbReference>
<dbReference type="PhylomeDB" id="Q9NWL6"/>
<dbReference type="TreeFam" id="TF314578"/>
<dbReference type="PathwayCommons" id="Q9NWL6"/>
<dbReference type="SignaLink" id="Q9NWL6"/>
<dbReference type="BioGRID-ORCS" id="54529">
    <property type="hits" value="39 hits in 1154 CRISPR screens"/>
</dbReference>
<dbReference type="ChiTaRS" id="ASNSD1">
    <property type="organism name" value="human"/>
</dbReference>
<dbReference type="GenomeRNAi" id="54529"/>
<dbReference type="Pharos" id="Q9NWL6">
    <property type="development level" value="Tdark"/>
</dbReference>
<dbReference type="PRO" id="PR:Q9NWL6"/>
<dbReference type="Proteomes" id="UP000005640">
    <property type="component" value="Chromosome 2"/>
</dbReference>
<dbReference type="RNAct" id="Q9NWL6">
    <property type="molecule type" value="protein"/>
</dbReference>
<dbReference type="Bgee" id="ENSG00000138381">
    <property type="expression patterns" value="Expressed in cortical plate and 208 other cell types or tissues"/>
</dbReference>
<dbReference type="ExpressionAtlas" id="Q9NWL6">
    <property type="expression patterns" value="baseline and differential"/>
</dbReference>
<dbReference type="GO" id="GO:0004066">
    <property type="term" value="F:asparagine synthase (glutamine-hydrolyzing) activity"/>
    <property type="evidence" value="ECO:0007669"/>
    <property type="project" value="InterPro"/>
</dbReference>
<dbReference type="GO" id="GO:0060612">
    <property type="term" value="P:adipose tissue development"/>
    <property type="evidence" value="ECO:0007669"/>
    <property type="project" value="Ensembl"/>
</dbReference>
<dbReference type="GO" id="GO:0006529">
    <property type="term" value="P:asparagine biosynthetic process"/>
    <property type="evidence" value="ECO:0007669"/>
    <property type="project" value="UniProtKB-KW"/>
</dbReference>
<dbReference type="GO" id="GO:0007519">
    <property type="term" value="P:skeletal muscle tissue development"/>
    <property type="evidence" value="ECO:0007669"/>
    <property type="project" value="Ensembl"/>
</dbReference>
<dbReference type="GO" id="GO:0060290">
    <property type="term" value="P:transdifferentiation"/>
    <property type="evidence" value="ECO:0007669"/>
    <property type="project" value="Ensembl"/>
</dbReference>
<dbReference type="CDD" id="cd01991">
    <property type="entry name" value="Asn_synthase_B_C"/>
    <property type="match status" value="1"/>
</dbReference>
<dbReference type="CDD" id="cd03766">
    <property type="entry name" value="Gn_AT_II_novel"/>
    <property type="match status" value="1"/>
</dbReference>
<dbReference type="Gene3D" id="3.60.20.10">
    <property type="entry name" value="Glutamine Phosphoribosylpyrophosphate, subunit 1, domain 1"/>
    <property type="match status" value="1"/>
</dbReference>
<dbReference type="Gene3D" id="3.40.50.620">
    <property type="entry name" value="HUPs"/>
    <property type="match status" value="1"/>
</dbReference>
<dbReference type="InterPro" id="IPR001962">
    <property type="entry name" value="Asn_synthase"/>
</dbReference>
<dbReference type="InterPro" id="IPR051857">
    <property type="entry name" value="Asn_synthetase_domain"/>
</dbReference>
<dbReference type="InterPro" id="IPR017932">
    <property type="entry name" value="GATase_2_dom"/>
</dbReference>
<dbReference type="InterPro" id="IPR029055">
    <property type="entry name" value="Ntn_hydrolases_N"/>
</dbReference>
<dbReference type="InterPro" id="IPR014729">
    <property type="entry name" value="Rossmann-like_a/b/a_fold"/>
</dbReference>
<dbReference type="PANTHER" id="PTHR45937">
    <property type="entry name" value="ASPARAGINE SYNTHETASE DOMAIN-CONTAINING PROTEIN 1"/>
    <property type="match status" value="1"/>
</dbReference>
<dbReference type="PANTHER" id="PTHR45937:SF1">
    <property type="entry name" value="ASPARAGINE SYNTHETASE DOMAIN-CONTAINING PROTEIN 1"/>
    <property type="match status" value="1"/>
</dbReference>
<dbReference type="Pfam" id="PF00733">
    <property type="entry name" value="Asn_synthase"/>
    <property type="match status" value="1"/>
</dbReference>
<dbReference type="SUPFAM" id="SSF52402">
    <property type="entry name" value="Adenine nucleotide alpha hydrolases-like"/>
    <property type="match status" value="1"/>
</dbReference>
<dbReference type="SUPFAM" id="SSF56235">
    <property type="entry name" value="N-terminal nucleophile aminohydrolases (Ntn hydrolases)"/>
    <property type="match status" value="1"/>
</dbReference>
<dbReference type="PROSITE" id="PS51278">
    <property type="entry name" value="GATASE_TYPE_2"/>
    <property type="match status" value="1"/>
</dbReference>
<comment type="alternative products">
    <event type="alternative initiation"/>
    <isoform>
        <id>Q9NWL6-1</id>
        <name>1</name>
        <sequence type="displayed"/>
    </isoform>
    <isoform>
        <id>L0R819-1</id>
        <name>2</name>
        <name evidence="8">uORF</name>
        <sequence type="external"/>
    </isoform>
</comment>
<sequence length="643" mass="72080">MCGICCSVNFSAEHFSQDLKEDLLYNLKQRGPNSSKQLLKSDVNYQCLFSAHVLHLRGVLTTQPVEDERGNVFLWNGEIFSGIKVEAEENDTQILFNYLSSCKNESEILSLFSEVQGPWSFIYYQASSHYLWFGRDFFGRRSLLWHFSNLGKSFCLSSVGTQTSGLANQWQEVPASGLFRIDLKSTVISGCIILQLYPWKYISRENIIEENVNSLSQISADLPAFVSVVANEAKLYLEKPVVPLNMMLPQAALETHCSNISNVPPTREILQVFLTDVHMKEVIQQFIDVLSVAVKKRVLCLPRDENLTANEVLKTCDRKANVAILFSGGIDSMVIATLADRHIPLDEPIDLLNVAFIAEEKTMPTTFNREGNKQKNKCEIPSEEFSKDVAAAAADSPNKHVSVPDRITGRAGLKELQAVSPSRIWNFVEINVSMEELQKLRRTRICHLIRPLDTVLDDSIGCAVWFASRGIGWLVAQEGVKSYQSNAKVVLTGIGADEQLAGYSRHRVRFQSHGLEGLNKEIMMELGRISSRNLGRDDRVIGDHGKEARFPFLDENVVSFLNSLPIWEKANLTLPRGIGEKLLLRLAAVELGLTASALLPKRAMQFGSRIAKMEKINEKASDKCGRLQIMSLENLSIEKETKL</sequence>
<reference key="1">
    <citation type="submission" date="2002-06" db="EMBL/GenBank/DDBJ databases">
        <title>Cloning and identification of human gene 1 transactivated by hepatitis C virus NS3 protein.</title>
        <authorList>
            <person name="Liu Y."/>
            <person name="Cheng J."/>
            <person name="Mu J."/>
            <person name="Wang G."/>
            <person name="Zhang L."/>
            <person name="Chen J."/>
            <person name="Li L."/>
        </authorList>
    </citation>
    <scope>NUCLEOTIDE SEQUENCE [MRNA]</scope>
    <scope>VARIANT ARG-190</scope>
</reference>
<reference key="2">
    <citation type="journal article" date="2004" name="Nat. Genet.">
        <title>Complete sequencing and characterization of 21,243 full-length human cDNAs.</title>
        <authorList>
            <person name="Ota T."/>
            <person name="Suzuki Y."/>
            <person name="Nishikawa T."/>
            <person name="Otsuki T."/>
            <person name="Sugiyama T."/>
            <person name="Irie R."/>
            <person name="Wakamatsu A."/>
            <person name="Hayashi K."/>
            <person name="Sato H."/>
            <person name="Nagai K."/>
            <person name="Kimura K."/>
            <person name="Makita H."/>
            <person name="Sekine M."/>
            <person name="Obayashi M."/>
            <person name="Nishi T."/>
            <person name="Shibahara T."/>
            <person name="Tanaka T."/>
            <person name="Ishii S."/>
            <person name="Yamamoto J."/>
            <person name="Saito K."/>
            <person name="Kawai Y."/>
            <person name="Isono Y."/>
            <person name="Nakamura Y."/>
            <person name="Nagahari K."/>
            <person name="Murakami K."/>
            <person name="Yasuda T."/>
            <person name="Iwayanagi T."/>
            <person name="Wagatsuma M."/>
            <person name="Shiratori A."/>
            <person name="Sudo H."/>
            <person name="Hosoiri T."/>
            <person name="Kaku Y."/>
            <person name="Kodaira H."/>
            <person name="Kondo H."/>
            <person name="Sugawara M."/>
            <person name="Takahashi M."/>
            <person name="Kanda K."/>
            <person name="Yokoi T."/>
            <person name="Furuya T."/>
            <person name="Kikkawa E."/>
            <person name="Omura Y."/>
            <person name="Abe K."/>
            <person name="Kamihara K."/>
            <person name="Katsuta N."/>
            <person name="Sato K."/>
            <person name="Tanikawa M."/>
            <person name="Yamazaki M."/>
            <person name="Ninomiya K."/>
            <person name="Ishibashi T."/>
            <person name="Yamashita H."/>
            <person name="Murakawa K."/>
            <person name="Fujimori K."/>
            <person name="Tanai H."/>
            <person name="Kimata M."/>
            <person name="Watanabe M."/>
            <person name="Hiraoka S."/>
            <person name="Chiba Y."/>
            <person name="Ishida S."/>
            <person name="Ono Y."/>
            <person name="Takiguchi S."/>
            <person name="Watanabe S."/>
            <person name="Yosida M."/>
            <person name="Hotuta T."/>
            <person name="Kusano J."/>
            <person name="Kanehori K."/>
            <person name="Takahashi-Fujii A."/>
            <person name="Hara H."/>
            <person name="Tanase T.-O."/>
            <person name="Nomura Y."/>
            <person name="Togiya S."/>
            <person name="Komai F."/>
            <person name="Hara R."/>
            <person name="Takeuchi K."/>
            <person name="Arita M."/>
            <person name="Imose N."/>
            <person name="Musashino K."/>
            <person name="Yuuki H."/>
            <person name="Oshima A."/>
            <person name="Sasaki N."/>
            <person name="Aotsuka S."/>
            <person name="Yoshikawa Y."/>
            <person name="Matsunawa H."/>
            <person name="Ichihara T."/>
            <person name="Shiohata N."/>
            <person name="Sano S."/>
            <person name="Moriya S."/>
            <person name="Momiyama H."/>
            <person name="Satoh N."/>
            <person name="Takami S."/>
            <person name="Terashima Y."/>
            <person name="Suzuki O."/>
            <person name="Nakagawa S."/>
            <person name="Senoh A."/>
            <person name="Mizoguchi H."/>
            <person name="Goto Y."/>
            <person name="Shimizu F."/>
            <person name="Wakebe H."/>
            <person name="Hishigaki H."/>
            <person name="Watanabe T."/>
            <person name="Sugiyama A."/>
            <person name="Takemoto M."/>
            <person name="Kawakami B."/>
            <person name="Yamazaki M."/>
            <person name="Watanabe K."/>
            <person name="Kumagai A."/>
            <person name="Itakura S."/>
            <person name="Fukuzumi Y."/>
            <person name="Fujimori Y."/>
            <person name="Komiyama M."/>
            <person name="Tashiro H."/>
            <person name="Tanigami A."/>
            <person name="Fujiwara T."/>
            <person name="Ono T."/>
            <person name="Yamada K."/>
            <person name="Fujii Y."/>
            <person name="Ozaki K."/>
            <person name="Hirao M."/>
            <person name="Ohmori Y."/>
            <person name="Kawabata A."/>
            <person name="Hikiji T."/>
            <person name="Kobatake N."/>
            <person name="Inagaki H."/>
            <person name="Ikema Y."/>
            <person name="Okamoto S."/>
            <person name="Okitani R."/>
            <person name="Kawakami T."/>
            <person name="Noguchi S."/>
            <person name="Itoh T."/>
            <person name="Shigeta K."/>
            <person name="Senba T."/>
            <person name="Matsumura K."/>
            <person name="Nakajima Y."/>
            <person name="Mizuno T."/>
            <person name="Morinaga M."/>
            <person name="Sasaki M."/>
            <person name="Togashi T."/>
            <person name="Oyama M."/>
            <person name="Hata H."/>
            <person name="Watanabe M."/>
            <person name="Komatsu T."/>
            <person name="Mizushima-Sugano J."/>
            <person name="Satoh T."/>
            <person name="Shirai Y."/>
            <person name="Takahashi Y."/>
            <person name="Nakagawa K."/>
            <person name="Okumura K."/>
            <person name="Nagase T."/>
            <person name="Nomura N."/>
            <person name="Kikuchi H."/>
            <person name="Masuho Y."/>
            <person name="Yamashita R."/>
            <person name="Nakai K."/>
            <person name="Yada T."/>
            <person name="Nakamura Y."/>
            <person name="Ohara O."/>
            <person name="Isogai T."/>
            <person name="Sugano S."/>
        </authorList>
    </citation>
    <scope>NUCLEOTIDE SEQUENCE [LARGE SCALE MRNA]</scope>
    <scope>VARIANT ARG-190</scope>
    <source>
        <tissue>Hepatoma</tissue>
    </source>
</reference>
<reference key="3">
    <citation type="journal article" date="2005" name="Nature">
        <title>Generation and annotation of the DNA sequences of human chromosomes 2 and 4.</title>
        <authorList>
            <person name="Hillier L.W."/>
            <person name="Graves T.A."/>
            <person name="Fulton R.S."/>
            <person name="Fulton L.A."/>
            <person name="Pepin K.H."/>
            <person name="Minx P."/>
            <person name="Wagner-McPherson C."/>
            <person name="Layman D."/>
            <person name="Wylie K."/>
            <person name="Sekhon M."/>
            <person name="Becker M.C."/>
            <person name="Fewell G.A."/>
            <person name="Delehaunty K.D."/>
            <person name="Miner T.L."/>
            <person name="Nash W.E."/>
            <person name="Kremitzki C."/>
            <person name="Oddy L."/>
            <person name="Du H."/>
            <person name="Sun H."/>
            <person name="Bradshaw-Cordum H."/>
            <person name="Ali J."/>
            <person name="Carter J."/>
            <person name="Cordes M."/>
            <person name="Harris A."/>
            <person name="Isak A."/>
            <person name="van Brunt A."/>
            <person name="Nguyen C."/>
            <person name="Du F."/>
            <person name="Courtney L."/>
            <person name="Kalicki J."/>
            <person name="Ozersky P."/>
            <person name="Abbott S."/>
            <person name="Armstrong J."/>
            <person name="Belter E.A."/>
            <person name="Caruso L."/>
            <person name="Cedroni M."/>
            <person name="Cotton M."/>
            <person name="Davidson T."/>
            <person name="Desai A."/>
            <person name="Elliott G."/>
            <person name="Erb T."/>
            <person name="Fronick C."/>
            <person name="Gaige T."/>
            <person name="Haakenson W."/>
            <person name="Haglund K."/>
            <person name="Holmes A."/>
            <person name="Harkins R."/>
            <person name="Kim K."/>
            <person name="Kruchowski S.S."/>
            <person name="Strong C.M."/>
            <person name="Grewal N."/>
            <person name="Goyea E."/>
            <person name="Hou S."/>
            <person name="Levy A."/>
            <person name="Martinka S."/>
            <person name="Mead K."/>
            <person name="McLellan M.D."/>
            <person name="Meyer R."/>
            <person name="Randall-Maher J."/>
            <person name="Tomlinson C."/>
            <person name="Dauphin-Kohlberg S."/>
            <person name="Kozlowicz-Reilly A."/>
            <person name="Shah N."/>
            <person name="Swearengen-Shahid S."/>
            <person name="Snider J."/>
            <person name="Strong J.T."/>
            <person name="Thompson J."/>
            <person name="Yoakum M."/>
            <person name="Leonard S."/>
            <person name="Pearman C."/>
            <person name="Trani L."/>
            <person name="Radionenko M."/>
            <person name="Waligorski J.E."/>
            <person name="Wang C."/>
            <person name="Rock S.M."/>
            <person name="Tin-Wollam A.-M."/>
            <person name="Maupin R."/>
            <person name="Latreille P."/>
            <person name="Wendl M.C."/>
            <person name="Yang S.-P."/>
            <person name="Pohl C."/>
            <person name="Wallis J.W."/>
            <person name="Spieth J."/>
            <person name="Bieri T.A."/>
            <person name="Berkowicz N."/>
            <person name="Nelson J.O."/>
            <person name="Osborne J."/>
            <person name="Ding L."/>
            <person name="Meyer R."/>
            <person name="Sabo A."/>
            <person name="Shotland Y."/>
            <person name="Sinha P."/>
            <person name="Wohldmann P.E."/>
            <person name="Cook L.L."/>
            <person name="Hickenbotham M.T."/>
            <person name="Eldred J."/>
            <person name="Williams D."/>
            <person name="Jones T.A."/>
            <person name="She X."/>
            <person name="Ciccarelli F.D."/>
            <person name="Izaurralde E."/>
            <person name="Taylor J."/>
            <person name="Schmutz J."/>
            <person name="Myers R.M."/>
            <person name="Cox D.R."/>
            <person name="Huang X."/>
            <person name="McPherson J.D."/>
            <person name="Mardis E.R."/>
            <person name="Clifton S.W."/>
            <person name="Warren W.C."/>
            <person name="Chinwalla A.T."/>
            <person name="Eddy S.R."/>
            <person name="Marra M.A."/>
            <person name="Ovcharenko I."/>
            <person name="Furey T.S."/>
            <person name="Miller W."/>
            <person name="Eichler E.E."/>
            <person name="Bork P."/>
            <person name="Suyama M."/>
            <person name="Torrents D."/>
            <person name="Waterston R.H."/>
            <person name="Wilson R.K."/>
        </authorList>
    </citation>
    <scope>NUCLEOTIDE SEQUENCE [LARGE SCALE GENOMIC DNA]</scope>
</reference>
<reference key="4">
    <citation type="submission" date="2005-09" db="EMBL/GenBank/DDBJ databases">
        <authorList>
            <person name="Mural R.J."/>
            <person name="Istrail S."/>
            <person name="Sutton G.G."/>
            <person name="Florea L."/>
            <person name="Halpern A.L."/>
            <person name="Mobarry C.M."/>
            <person name="Lippert R."/>
            <person name="Walenz B."/>
            <person name="Shatkay H."/>
            <person name="Dew I."/>
            <person name="Miller J.R."/>
            <person name="Flanigan M.J."/>
            <person name="Edwards N.J."/>
            <person name="Bolanos R."/>
            <person name="Fasulo D."/>
            <person name="Halldorsson B.V."/>
            <person name="Hannenhalli S."/>
            <person name="Turner R."/>
            <person name="Yooseph S."/>
            <person name="Lu F."/>
            <person name="Nusskern D.R."/>
            <person name="Shue B.C."/>
            <person name="Zheng X.H."/>
            <person name="Zhong F."/>
            <person name="Delcher A.L."/>
            <person name="Huson D.H."/>
            <person name="Kravitz S.A."/>
            <person name="Mouchard L."/>
            <person name="Reinert K."/>
            <person name="Remington K.A."/>
            <person name="Clark A.G."/>
            <person name="Waterman M.S."/>
            <person name="Eichler E.E."/>
            <person name="Adams M.D."/>
            <person name="Hunkapiller M.W."/>
            <person name="Myers E.W."/>
            <person name="Venter J.C."/>
        </authorList>
    </citation>
    <scope>NUCLEOTIDE SEQUENCE [LARGE SCALE GENOMIC DNA]</scope>
    <scope>VARIANT ARG-190</scope>
</reference>
<reference key="5">
    <citation type="journal article" date="2004" name="Genome Res.">
        <title>The status, quality, and expansion of the NIH full-length cDNA project: the Mammalian Gene Collection (MGC).</title>
        <authorList>
            <consortium name="The MGC Project Team"/>
        </authorList>
    </citation>
    <scope>NUCLEOTIDE SEQUENCE [LARGE SCALE MRNA]</scope>
    <scope>VARIANT ARG-190</scope>
    <source>
        <tissue>Placenta</tissue>
    </source>
</reference>
<reference key="6">
    <citation type="journal article" date="2003" name="Cancer Lett.">
        <title>Neuroblastoma oligo-capping cDNA project: toward the understanding of the genesis and biology of neuroblastoma.</title>
        <authorList>
            <person name="Ohira M."/>
            <person name="Morohashi A."/>
            <person name="Nakamura Y."/>
            <person name="Isogai E."/>
            <person name="Furuya K."/>
            <person name="Hamano S."/>
            <person name="Machida T."/>
            <person name="Aoyama M."/>
            <person name="Fukumura M."/>
            <person name="Miyazaki K."/>
            <person name="Suzuki Y."/>
            <person name="Sugano S."/>
            <person name="Hirato J."/>
            <person name="Nakagawara A."/>
        </authorList>
    </citation>
    <scope>NUCLEOTIDE SEQUENCE [LARGE SCALE MRNA] OF 40-643</scope>
    <scope>VARIANT ARG-190</scope>
    <source>
        <tissue>Neuroblastoma</tissue>
    </source>
</reference>
<reference key="7">
    <citation type="journal article" date="2013" name="Nat. Chem. Biol.">
        <title>Peptidomic discovery of short open reading frame-encoded peptides in human cells.</title>
        <authorList>
            <person name="Slavoff S.A."/>
            <person name="Mitchell A.J."/>
            <person name="Schwaid A.G."/>
            <person name="Cabili M.N."/>
            <person name="Ma J."/>
            <person name="Levin J.Z."/>
            <person name="Karger A.D."/>
            <person name="Budnik B.A."/>
            <person name="Rinn J.L."/>
            <person name="Saghatelian A."/>
        </authorList>
    </citation>
    <scope>ALTERNATIVE INITIATION (ISOFORM 2)</scope>
</reference>
<reference key="8">
    <citation type="journal article" date="2013" name="PLoS ONE">
        <title>Direct detection of alternative open reading frames translation products in human significantly expands the proteome.</title>
        <authorList>
            <person name="Vanderperre B."/>
            <person name="Lucier J.-F."/>
            <person name="Motard J."/>
            <person name="Tremblay G."/>
            <person name="Vanderperre S."/>
            <person name="Wisztorski M."/>
            <person name="Salzet M."/>
            <person name="Boisvert F.-M."/>
            <person name="Roucou X."/>
        </authorList>
    </citation>
    <scope>ALTERNATIVE INITIATION (ISOFORM 2)</scope>
</reference>
<reference key="9">
    <citation type="journal article" date="2015" name="Crit. Rev. Biochem. Mol. Biol.">
        <title>Identification and characterization of sORF-encoded polypeptides.</title>
        <authorList>
            <person name="Chu Q."/>
            <person name="Ma J."/>
            <person name="Saghatelian A."/>
        </authorList>
    </citation>
    <scope>ALTERNATIVE INITIATION (ISOFORM 2)</scope>
</reference>
<evidence type="ECO:0000250" key="1"/>
<evidence type="ECO:0000255" key="2">
    <source>
        <dbReference type="PROSITE-ProRule" id="PRU00609"/>
    </source>
</evidence>
<evidence type="ECO:0000269" key="3">
    <source>
    </source>
</evidence>
<evidence type="ECO:0000269" key="4">
    <source>
    </source>
</evidence>
<evidence type="ECO:0000269" key="5">
    <source>
    </source>
</evidence>
<evidence type="ECO:0000269" key="6">
    <source ref="1"/>
</evidence>
<evidence type="ECO:0000269" key="7">
    <source ref="4"/>
</evidence>
<evidence type="ECO:0000303" key="8">
    <source>
    </source>
</evidence>
<protein>
    <recommendedName>
        <fullName>Asparagine synthetase domain-containing protein 1</fullName>
    </recommendedName>
    <alternativeName>
        <fullName>HCV NS3-transactivated protein 1</fullName>
    </alternativeName>
</protein>
<organism>
    <name type="scientific">Homo sapiens</name>
    <name type="common">Human</name>
    <dbReference type="NCBI Taxonomy" id="9606"/>
    <lineage>
        <taxon>Eukaryota</taxon>
        <taxon>Metazoa</taxon>
        <taxon>Chordata</taxon>
        <taxon>Craniata</taxon>
        <taxon>Vertebrata</taxon>
        <taxon>Euteleostomi</taxon>
        <taxon>Mammalia</taxon>
        <taxon>Eutheria</taxon>
        <taxon>Euarchontoglires</taxon>
        <taxon>Primates</taxon>
        <taxon>Haplorrhini</taxon>
        <taxon>Catarrhini</taxon>
        <taxon>Hominidae</taxon>
        <taxon>Homo</taxon>
    </lineage>
</organism>
<proteinExistence type="evidence at protein level"/>
<keyword id="KW-0024">Alternative initiation</keyword>
<keyword id="KW-0028">Amino-acid biosynthesis</keyword>
<keyword id="KW-0061">Asparagine biosynthesis</keyword>
<keyword id="KW-0315">Glutamine amidotransferase</keyword>
<keyword id="KW-1267">Proteomics identification</keyword>
<keyword id="KW-1185">Reference proteome</keyword>
<name>ASND1_HUMAN</name>
<accession>Q9NWL6</accession>
<accession>D3DPH6</accession>
<accession>Q3LIC3</accession>
<accession>Q4ZG45</accession>
<feature type="initiator methionine" description="Removed" evidence="1">
    <location>
        <position position="1"/>
    </location>
</feature>
<feature type="chain" id="PRO_0000324760" description="Asparagine synthetase domain-containing protein 1">
    <location>
        <begin position="2"/>
        <end position="643"/>
    </location>
</feature>
<feature type="domain" description="Glutamine amidotransferase type-2" evidence="2">
    <location>
        <begin position="2"/>
        <end position="184"/>
    </location>
</feature>
<feature type="domain" description="Asparagine synthetase">
    <location>
        <begin position="285"/>
        <end position="601"/>
    </location>
</feature>
<feature type="active site" description="For GATase activity" evidence="1">
    <location>
        <position position="2"/>
    </location>
</feature>
<feature type="sequence variant" id="VAR_039876" description="In dbSNP:rs1437880." evidence="3 4 5 6 7">
    <original>G</original>
    <variation>R</variation>
    <location>
        <position position="190"/>
    </location>
</feature>
<feature type="sequence variant" id="VAR_039877" description="In dbSNP:rs35137531.">
    <original>M</original>
    <variation>T</variation>
    <location>
        <position position="434"/>
    </location>
</feature>